<accession>Q04737</accession>
<name>Y751_SYNY3</name>
<protein>
    <recommendedName>
        <fullName>TPR repeat-containing protein slr0751</fullName>
    </recommendedName>
</protein>
<reference key="1">
    <citation type="journal article" date="1992" name="Biosci. Biotechnol. Biochem.">
        <title>Cloning and nucleotide sequence of a frxC-ORF469 gene cluster of Synechocystis PCC6803: conservation with liverwort chloroplast frxC-ORF465 and nif operon.</title>
        <authorList>
            <person name="Ogura Y."/>
            <person name="Takemura M."/>
            <person name="Oda K."/>
            <person name="Yamato K."/>
            <person name="Ohta E."/>
            <person name="Fukuzawa H."/>
            <person name="Ohyama K."/>
        </authorList>
    </citation>
    <scope>NUCLEOTIDE SEQUENCE [GENOMIC DNA]</scope>
</reference>
<reference key="2">
    <citation type="journal article" date="1996" name="DNA Res.">
        <title>Sequence analysis of the genome of the unicellular cyanobacterium Synechocystis sp. strain PCC6803. II. Sequence determination of the entire genome and assignment of potential protein-coding regions.</title>
        <authorList>
            <person name="Kaneko T."/>
            <person name="Sato S."/>
            <person name="Kotani H."/>
            <person name="Tanaka A."/>
            <person name="Asamizu E."/>
            <person name="Nakamura Y."/>
            <person name="Miyajima N."/>
            <person name="Hirosawa M."/>
            <person name="Sugiura M."/>
            <person name="Sasamoto S."/>
            <person name="Kimura T."/>
            <person name="Hosouchi T."/>
            <person name="Matsuno A."/>
            <person name="Muraki A."/>
            <person name="Nakazaki N."/>
            <person name="Naruo K."/>
            <person name="Okumura S."/>
            <person name="Shimpo S."/>
            <person name="Takeuchi C."/>
            <person name="Wada T."/>
            <person name="Watanabe A."/>
            <person name="Yamada M."/>
            <person name="Yasuda M."/>
            <person name="Tabata S."/>
        </authorList>
    </citation>
    <scope>NUCLEOTIDE SEQUENCE [LARGE SCALE GENOMIC DNA]</scope>
    <source>
        <strain>ATCC 27184 / PCC 6803 / Kazusa</strain>
    </source>
</reference>
<proteinExistence type="predicted"/>
<dbReference type="EMBL" id="D10474">
    <property type="protein sequence ID" value="BAA01277.1"/>
    <property type="molecule type" value="Genomic_DNA"/>
</dbReference>
<dbReference type="EMBL" id="BA000022">
    <property type="protein sequence ID" value="BAA18748.1"/>
    <property type="molecule type" value="Genomic_DNA"/>
</dbReference>
<dbReference type="PIR" id="JT0603">
    <property type="entry name" value="JT0603"/>
</dbReference>
<dbReference type="SMR" id="Q04737"/>
<dbReference type="IntAct" id="Q04737">
    <property type="interactions" value="1"/>
</dbReference>
<dbReference type="STRING" id="1148.gene:10500520"/>
<dbReference type="PaxDb" id="1148-1653838"/>
<dbReference type="EnsemblBacteria" id="BAA18748">
    <property type="protein sequence ID" value="BAA18748"/>
    <property type="gene ID" value="BAA18748"/>
</dbReference>
<dbReference type="KEGG" id="syn:slr0751"/>
<dbReference type="eggNOG" id="COG0457">
    <property type="taxonomic scope" value="Bacteria"/>
</dbReference>
<dbReference type="InParanoid" id="Q04737"/>
<dbReference type="PhylomeDB" id="Q04737"/>
<dbReference type="Proteomes" id="UP000001425">
    <property type="component" value="Chromosome"/>
</dbReference>
<dbReference type="GO" id="GO:0009279">
    <property type="term" value="C:cell outer membrane"/>
    <property type="evidence" value="ECO:0000318"/>
    <property type="project" value="GO_Central"/>
</dbReference>
<dbReference type="GO" id="GO:0046813">
    <property type="term" value="P:receptor-mediated virion attachment to host cell"/>
    <property type="evidence" value="ECO:0000318"/>
    <property type="project" value="GO_Central"/>
</dbReference>
<dbReference type="Gene3D" id="1.25.40.10">
    <property type="entry name" value="Tetratricopeptide repeat domain"/>
    <property type="match status" value="2"/>
</dbReference>
<dbReference type="InterPro" id="IPR011990">
    <property type="entry name" value="TPR-like_helical_dom_sf"/>
</dbReference>
<dbReference type="InterPro" id="IPR019734">
    <property type="entry name" value="TPR_rpt"/>
</dbReference>
<dbReference type="InterPro" id="IPR050498">
    <property type="entry name" value="Ycf3"/>
</dbReference>
<dbReference type="PANTHER" id="PTHR44858">
    <property type="entry name" value="TETRATRICOPEPTIDE REPEAT PROTEIN 6"/>
    <property type="match status" value="1"/>
</dbReference>
<dbReference type="PANTHER" id="PTHR44858:SF1">
    <property type="entry name" value="UDP-N-ACETYLGLUCOSAMINE--PEPTIDE N-ACETYLGLUCOSAMINYLTRANSFERASE SPINDLY-RELATED"/>
    <property type="match status" value="1"/>
</dbReference>
<dbReference type="Pfam" id="PF00515">
    <property type="entry name" value="TPR_1"/>
    <property type="match status" value="1"/>
</dbReference>
<dbReference type="Pfam" id="PF13414">
    <property type="entry name" value="TPR_11"/>
    <property type="match status" value="2"/>
</dbReference>
<dbReference type="SMART" id="SM00028">
    <property type="entry name" value="TPR"/>
    <property type="match status" value="5"/>
</dbReference>
<dbReference type="SUPFAM" id="SSF48452">
    <property type="entry name" value="TPR-like"/>
    <property type="match status" value="1"/>
</dbReference>
<dbReference type="PROSITE" id="PS50005">
    <property type="entry name" value="TPR"/>
    <property type="match status" value="4"/>
</dbReference>
<dbReference type="PROSITE" id="PS50293">
    <property type="entry name" value="TPR_REGION"/>
    <property type="match status" value="1"/>
</dbReference>
<feature type="chain" id="PRO_0000106451" description="TPR repeat-containing protein slr0751">
    <location>
        <begin position="1"/>
        <end position="248"/>
    </location>
</feature>
<feature type="repeat" description="TPR 1">
    <location>
        <begin position="61"/>
        <end position="94"/>
    </location>
</feature>
<feature type="repeat" description="TPR 2">
    <location>
        <begin position="95"/>
        <end position="128"/>
    </location>
</feature>
<feature type="repeat" description="TPR 3">
    <location>
        <begin position="129"/>
        <end position="162"/>
    </location>
</feature>
<feature type="repeat" description="TPR 4">
    <location>
        <begin position="163"/>
        <end position="196"/>
    </location>
</feature>
<sequence length="248" mass="27753">MKVNLGNCFCLSLSQKKFPLPLASLLVNVPLALMVALGMNLALERPGVTGEMVVLESPIAPEAIFAQGVKAGEAGNYAEAVELFSVVLNLSPDSPETHYNRGLAWERLGNVDQAIADYGRSIALDRYYIPPYINRGNLYSQQQDHHTAIQDFTQAITYDPNRYKAYYNRANSYFQLGQYAQAIADYNRVLVLRPDYINAIYNRGLAHFQAGQLDSSRQDLLFSAQAYLNRGDRRSYLEALDQMSELGL</sequence>
<gene>
    <name type="ordered locus">slr0751</name>
</gene>
<organism>
    <name type="scientific">Synechocystis sp. (strain ATCC 27184 / PCC 6803 / Kazusa)</name>
    <dbReference type="NCBI Taxonomy" id="1111708"/>
    <lineage>
        <taxon>Bacteria</taxon>
        <taxon>Bacillati</taxon>
        <taxon>Cyanobacteriota</taxon>
        <taxon>Cyanophyceae</taxon>
        <taxon>Synechococcales</taxon>
        <taxon>Merismopediaceae</taxon>
        <taxon>Synechocystis</taxon>
    </lineage>
</organism>
<keyword id="KW-1185">Reference proteome</keyword>
<keyword id="KW-0677">Repeat</keyword>
<keyword id="KW-0802">TPR repeat</keyword>